<feature type="chain" id="PRO_0000442159" description="4-hydroxytryptamine kinase">
    <location>
        <begin position="1"/>
        <end position="362"/>
    </location>
</feature>
<feature type="active site" evidence="5">
    <location>
        <position position="224"/>
    </location>
</feature>
<feature type="binding site" evidence="1">
    <location>
        <position position="37"/>
    </location>
    <ligand>
        <name>ATP</name>
        <dbReference type="ChEBI" id="CHEBI:30616"/>
    </ligand>
</feature>
<feature type="binding site" evidence="1">
    <location>
        <position position="57"/>
    </location>
    <ligand>
        <name>ATP</name>
        <dbReference type="ChEBI" id="CHEBI:30616"/>
    </ligand>
</feature>
<feature type="binding site" evidence="1">
    <location>
        <begin position="118"/>
        <end position="120"/>
    </location>
    <ligand>
        <name>ATP</name>
        <dbReference type="ChEBI" id="CHEBI:30616"/>
    </ligand>
</feature>
<feature type="binding site" evidence="1">
    <location>
        <begin position="249"/>
        <end position="251"/>
    </location>
    <ligand>
        <name>ATP</name>
        <dbReference type="ChEBI" id="CHEBI:30616"/>
    </ligand>
</feature>
<feature type="mutagenesis site" description="Impairs catalytic activity." evidence="5">
    <original>D</original>
    <variation>A</variation>
    <location>
        <position position="224"/>
    </location>
</feature>
<feature type="helix" evidence="9">
    <location>
        <begin position="8"/>
        <end position="17"/>
    </location>
</feature>
<feature type="strand" evidence="9">
    <location>
        <begin position="23"/>
        <end position="33"/>
    </location>
</feature>
<feature type="strand" evidence="9">
    <location>
        <begin position="35"/>
        <end position="48"/>
    </location>
</feature>
<feature type="strand" evidence="9">
    <location>
        <begin position="51"/>
        <end position="59"/>
    </location>
</feature>
<feature type="helix" evidence="9">
    <location>
        <begin position="66"/>
        <end position="88"/>
    </location>
</feature>
<feature type="helix" evidence="9">
    <location>
        <begin position="90"/>
        <end position="93"/>
    </location>
</feature>
<feature type="turn" evidence="9">
    <location>
        <begin position="95"/>
        <end position="97"/>
    </location>
</feature>
<feature type="strand" evidence="9">
    <location>
        <begin position="105"/>
        <end position="109"/>
    </location>
</feature>
<feature type="turn" evidence="9">
    <location>
        <begin position="110"/>
        <end position="113"/>
    </location>
</feature>
<feature type="strand" evidence="9">
    <location>
        <begin position="114"/>
        <end position="118"/>
    </location>
</feature>
<feature type="helix" evidence="9">
    <location>
        <begin position="126"/>
        <end position="129"/>
    </location>
</feature>
<feature type="strand" evidence="9">
    <location>
        <begin position="132"/>
        <end position="134"/>
    </location>
</feature>
<feature type="helix" evidence="9">
    <location>
        <begin position="138"/>
        <end position="161"/>
    </location>
</feature>
<feature type="turn" evidence="9">
    <location>
        <begin position="162"/>
        <end position="164"/>
    </location>
</feature>
<feature type="helix" evidence="9">
    <location>
        <begin position="166"/>
        <end position="172"/>
    </location>
</feature>
<feature type="helix" evidence="9">
    <location>
        <begin position="175"/>
        <end position="185"/>
    </location>
</feature>
<feature type="helix" evidence="9">
    <location>
        <begin position="188"/>
        <end position="193"/>
    </location>
</feature>
<feature type="turn" evidence="9">
    <location>
        <begin position="194"/>
        <end position="196"/>
    </location>
</feature>
<feature type="helix" evidence="9">
    <location>
        <begin position="202"/>
        <end position="215"/>
    </location>
</feature>
<feature type="strand" evidence="9">
    <location>
        <begin position="218"/>
        <end position="221"/>
    </location>
</feature>
<feature type="strand" evidence="9">
    <location>
        <begin position="229"/>
        <end position="234"/>
    </location>
</feature>
<feature type="strand" evidence="9">
    <location>
        <begin position="242"/>
        <end position="247"/>
    </location>
</feature>
<feature type="strand" evidence="9">
    <location>
        <begin position="254"/>
        <end position="256"/>
    </location>
</feature>
<feature type="helix" evidence="9">
    <location>
        <begin position="259"/>
        <end position="275"/>
    </location>
</feature>
<feature type="helix" evidence="9">
    <location>
        <begin position="278"/>
        <end position="295"/>
    </location>
</feature>
<feature type="helix" evidence="9">
    <location>
        <begin position="302"/>
        <end position="320"/>
    </location>
</feature>
<feature type="helix" evidence="9">
    <location>
        <begin position="325"/>
        <end position="343"/>
    </location>
</feature>
<feature type="helix" evidence="9">
    <location>
        <begin position="350"/>
        <end position="358"/>
    </location>
</feature>
<name>PSIK_PSICU</name>
<sequence length="362" mass="40442">MAFDLKTEDGLITYLTKHLSLDVDTSGVKRLSGGFVNVTWRIKLNAPYQGHTSIILKHAQPHMSTDEDFKIGVERSVYEYQAIKLMMANREVLGGVDGIVSVPEGLNYDLENNALIMQDVGKMKTLLDYVTAKPPLATDIARLVGTEIGGFVARLHNIGRERRDDPEFKFFSGNIVGRTTSDQLYQTIIPNAAKYGVDDPLLPTVVKDLVDDVMHSEETLVMADLWSGNILLQLEEGNPSKLQKIYILDWELCKYGPASLDLGYFLGDCYLISRFQDEQVGTTMRQAYLQSYARTSKHSINYAKVTAGIAAHIVMWTDFMQWGSEEERINFVKKGVAAFHDARGNNDNGEITSTLLKESSTA</sequence>
<proteinExistence type="evidence at protein level"/>
<reference key="1">
    <citation type="journal article" date="2017" name="Angew. Chem. Int. Ed.">
        <title>Enzymatic synthesis of psilocybin.</title>
        <authorList>
            <person name="Fricke J."/>
            <person name="Blei F."/>
            <person name="Hoffmeister D."/>
        </authorList>
    </citation>
    <scope>NUCLEOTIDE SEQUENCE [MRNA]</scope>
    <scope>IDENTIFICATION</scope>
    <scope>FUNCTION</scope>
    <scope>CATALYTIC ACTIVITY</scope>
    <scope>PATHWAY</scope>
</reference>
<reference key="2">
    <citation type="journal article" date="2016" name="J. Psychopharmacol.">
        <title>Rapid and sustained symptom reduction following psilocybin treatment for anxiety and depression in patients with life-threatening cancer: a randomized controlled trial.</title>
        <authorList>
            <person name="Ross S."/>
            <person name="Bossis A."/>
            <person name="Guss J."/>
            <person name="Agin-Liebes G."/>
            <person name="Malone T."/>
            <person name="Cohen B."/>
            <person name="Mennenga S.E."/>
            <person name="Belser A."/>
            <person name="Kalliontzi K."/>
            <person name="Babb J."/>
            <person name="Su Z."/>
            <person name="Corby P."/>
            <person name="Schmidt B.L."/>
        </authorList>
    </citation>
    <scope>BIOTECHNOLOGY</scope>
</reference>
<reference key="3">
    <citation type="journal article" date="2019" name="ChemBioChem">
        <title>Enzymatic route toward 6-methylated baeocystin and psilocybin.</title>
        <authorList>
            <person name="Fricke J."/>
            <person name="Sherwood A."/>
            <person name="Kargbo R."/>
            <person name="Orry A."/>
            <person name="Blei F."/>
            <person name="Naschberger A."/>
            <person name="Rupp B."/>
            <person name="Hoffmeister D."/>
        </authorList>
    </citation>
    <scope>FUNCTION</scope>
    <scope>CATALYTIC ACTIVITY</scope>
</reference>
<reference key="4">
    <citation type="journal article" date="2020" name="Chemistry">
        <title>Scalable hybrid synthetic/biocatalytic route to psilocybin.</title>
        <authorList>
            <person name="Fricke J."/>
            <person name="Kargbo R."/>
            <person name="Regestein L."/>
            <person name="Lenz C."/>
            <person name="Peschel G."/>
            <person name="Rosenbaum M.A."/>
            <person name="Sherwood A."/>
            <person name="Hoffmeister D."/>
        </authorList>
    </citation>
    <scope>FUNCTION</scope>
    <scope>CATALYTIC ACTIVITY</scope>
    <scope>BIOPHYSICOCHEMICAL PROPERTIES</scope>
    <scope>COFACTOR</scope>
    <scope>MUTAGENESIS OF ASP-224</scope>
    <scope>ACTIVE SITE</scope>
    <scope>SUBUNIT</scope>
</reference>
<reference key="5">
    <citation type="journal article" date="2022" name="ChemBioChem">
        <title>Genetic survey of Psilocybe natural products.</title>
        <authorList>
            <person name="Doerner S."/>
            <person name="Rogge K."/>
            <person name="Fricke J."/>
            <person name="Schaefer T."/>
            <person name="Wurlitzer J.M."/>
            <person name="Gressler M."/>
            <person name="Pham D.N.K."/>
            <person name="Manke D.R."/>
            <person name="Chadeayne A.R."/>
            <person name="Hoffmeister D."/>
        </authorList>
    </citation>
    <scope>FUNCTION</scope>
    <scope>CATALYTIC ACTIVITY</scope>
</reference>
<gene>
    <name evidence="7" type="primary">psiK</name>
</gene>
<protein>
    <recommendedName>
        <fullName evidence="7">4-hydroxytryptamine kinase</fullName>
        <ecNumber evidence="3 5 6">2.7.1.-</ecNumber>
        <ecNumber evidence="3 4 5 6">2.7.1.222</ecNumber>
    </recommendedName>
    <alternativeName>
        <fullName evidence="7">Psilocybin biosynthesis kinase</fullName>
    </alternativeName>
</protein>
<evidence type="ECO:0000250" key="1">
    <source>
        <dbReference type="UniProtKB" id="O31663"/>
    </source>
</evidence>
<evidence type="ECO:0000269" key="2">
    <source>
    </source>
</evidence>
<evidence type="ECO:0000269" key="3">
    <source>
    </source>
</evidence>
<evidence type="ECO:0000269" key="4">
    <source>
    </source>
</evidence>
<evidence type="ECO:0000269" key="5">
    <source>
    </source>
</evidence>
<evidence type="ECO:0000269" key="6">
    <source>
    </source>
</evidence>
<evidence type="ECO:0000303" key="7">
    <source>
    </source>
</evidence>
<evidence type="ECO:0000305" key="8"/>
<evidence type="ECO:0007829" key="9">
    <source>
        <dbReference type="PDB" id="9ETO"/>
    </source>
</evidence>
<accession>P0DPA8</accession>
<organism>
    <name type="scientific">Psilocybe cubensis</name>
    <name type="common">Psychedelic mushroom</name>
    <name type="synonym">Stropharia cubensis</name>
    <dbReference type="NCBI Taxonomy" id="181762"/>
    <lineage>
        <taxon>Eukaryota</taxon>
        <taxon>Fungi</taxon>
        <taxon>Dikarya</taxon>
        <taxon>Basidiomycota</taxon>
        <taxon>Agaricomycotina</taxon>
        <taxon>Agaricomycetes</taxon>
        <taxon>Agaricomycetidae</taxon>
        <taxon>Agaricales</taxon>
        <taxon>Agaricineae</taxon>
        <taxon>Strophariaceae</taxon>
        <taxon>Psilocybe</taxon>
    </lineage>
</organism>
<comment type="function">
    <text evidence="3 4 5 6">4-hydroxytryptamine kinase; part of the gene cluster that mediates the biosynthesis of psilocybin, a psychotropic tryptamine-derived natural product (PubMed:28763571, PubMed:31150155, PubMed:32101345). The first step in the pathway is the decarboxylation of L-tryptophan to tryptamine by the decarboxylase psiD (PubMed:28763571, PubMed:31150155). 4-hydroxy-L-tryptophan is accepted as substrate by psiD as well (PubMed:28763571). The cytochrome P450 monooxygenase psiH then converts tryptamine to 4-hydroxytryptamine (PubMed:28763571). The kinase psiK catalyzes the 4-O-phosphorylation step by converting 4-hydroxytryptamine into norbaeocystin (PubMed:28763571, PubMed:31150155, PubMed:32101345, PubMed:35583969). The methyltransferase psiM then catalyzes iterative methyl transfer to the amino group of norbaeocystin to yield psilocybin via a monomethylated intermediate, baeocystin (PubMed:28763571, PubMed:31150155). 4-hydroxy-6-methyl-l-tryptophancan also be converted the decarboxylase PsiD, kinase PsiK, and methyltransferase PsiM into respectively 6-methyl-norbaeocystin, 6-methylbaeocystin, and 6-methylpsilocybin (PubMed:31150155). PsiK kinase can also turn psilocin into psilocybin (PubMed:28763571, PubMed:35583969). This activity may represent a protective mechanism to rephosphorylate the unstable psilocin to the stable psilocybin in case of intracellular ester cleavage (PubMed:28763571, PubMed:35583969). Moreover, psiK is able to O-phosphorylate the quaternary amine 4-hydroxy-N,N,N-trimethyltryptamine (4-OH-TMT) to yield aeruginascin, another bioactive compound found in Psilocybe species (PubMed:35583969).</text>
</comment>
<comment type="catalytic activity">
    <reaction evidence="3 4 5 6">
        <text>4-hydroxytryptamine + ATP = norbaeocystin + ADP + H(+)</text>
        <dbReference type="Rhea" id="RHEA:55564"/>
        <dbReference type="ChEBI" id="CHEBI:15378"/>
        <dbReference type="ChEBI" id="CHEBI:30616"/>
        <dbReference type="ChEBI" id="CHEBI:139069"/>
        <dbReference type="ChEBI" id="CHEBI:139070"/>
        <dbReference type="ChEBI" id="CHEBI:456216"/>
        <dbReference type="EC" id="2.7.1.222"/>
    </reaction>
    <physiologicalReaction direction="left-to-right" evidence="3 4 5 6">
        <dbReference type="Rhea" id="RHEA:55565"/>
    </physiologicalReaction>
</comment>
<comment type="catalytic activity">
    <reaction evidence="3 6">
        <text>psilocin + ATP = psilocybin + ADP + H(+)</text>
        <dbReference type="Rhea" id="RHEA:73911"/>
        <dbReference type="ChEBI" id="CHEBI:15378"/>
        <dbReference type="ChEBI" id="CHEBI:30616"/>
        <dbReference type="ChEBI" id="CHEBI:139072"/>
        <dbReference type="ChEBI" id="CHEBI:193059"/>
        <dbReference type="ChEBI" id="CHEBI:456216"/>
        <dbReference type="EC" id="2.7.1.222"/>
    </reaction>
    <physiologicalReaction direction="left-to-right" evidence="3 6">
        <dbReference type="Rhea" id="RHEA:73912"/>
    </physiologicalReaction>
</comment>
<comment type="catalytic activity">
    <reaction evidence="6">
        <text>4-hydroxy-N,N,N-trimethyltryptamine + ATP = aeruginascin + ADP + H(+)</text>
        <dbReference type="Rhea" id="RHEA:73907"/>
        <dbReference type="ChEBI" id="CHEBI:15378"/>
        <dbReference type="ChEBI" id="CHEBI:30616"/>
        <dbReference type="ChEBI" id="CHEBI:193060"/>
        <dbReference type="ChEBI" id="CHEBI:193061"/>
        <dbReference type="ChEBI" id="CHEBI:456216"/>
    </reaction>
    <physiologicalReaction direction="left-to-right" evidence="6">
        <dbReference type="Rhea" id="RHEA:73908"/>
    </physiologicalReaction>
</comment>
<comment type="cofactor">
    <cofactor evidence="5">
        <name>Mg(2+)</name>
        <dbReference type="ChEBI" id="CHEBI:18420"/>
    </cofactor>
</comment>
<comment type="biophysicochemical properties">
    <kinetics>
        <KM evidence="5">72 uM for psilocin</KM>
        <KM evidence="5">67 uM for 4-hydroxytryptamine</KM>
        <KM evidence="5">89 uM for ATP</KM>
    </kinetics>
    <phDependence>
        <text evidence="5">Optimum pH is 7.0.</text>
    </phDependence>
    <temperatureDependence>
        <text evidence="5">Optimum temperature is 40 degrees Celsius.</text>
    </temperatureDependence>
</comment>
<comment type="pathway">
    <text evidence="3">Secondary metabolite biosynthesis.</text>
</comment>
<comment type="subunit">
    <text evidence="5">Monomer.</text>
</comment>
<comment type="biotechnology">
    <text evidence="2">The pharmaceutical interesting psilocybin as a treatment option against depression and anxiety is being investigated in advanced clinical trials.</text>
</comment>
<comment type="similarity">
    <text evidence="8">Belongs to the methylthioribose kinase family.</text>
</comment>
<comment type="online information" name="Protein Spotlight">
    <link uri="https://www.proteinspotlight.org/back_issues/198/"/>
    <text>When the mind bends - Issue 198 of December 2017</text>
</comment>
<keyword id="KW-0002">3D-structure</keyword>
<keyword id="KW-0067">ATP-binding</keyword>
<keyword id="KW-0418">Kinase</keyword>
<keyword id="KW-0460">Magnesium</keyword>
<keyword id="KW-0547">Nucleotide-binding</keyword>
<keyword id="KW-0808">Transferase</keyword>
<dbReference type="EC" id="2.7.1.-" evidence="3 5 6"/>
<dbReference type="EC" id="2.7.1.222" evidence="3 4 5 6"/>
<dbReference type="EMBL" id="KY984099">
    <property type="protein sequence ID" value="ASU62237.1"/>
    <property type="molecule type" value="mRNA"/>
</dbReference>
<dbReference type="PDB" id="9ETO">
    <property type="method" value="X-ray"/>
    <property type="resolution" value="2.54 A"/>
    <property type="chains" value="A/B=1-362"/>
</dbReference>
<dbReference type="PDBsum" id="9ETO"/>
<dbReference type="SMR" id="P0DPA8"/>
<dbReference type="KEGG" id="ag:ASU62237"/>
<dbReference type="BRENDA" id="2.7.1.222">
    <property type="organism ID" value="15552"/>
</dbReference>
<dbReference type="GO" id="GO:0140383">
    <property type="term" value="F:4-hydroxytryptamine kinase activity"/>
    <property type="evidence" value="ECO:0000314"/>
    <property type="project" value="UniProt"/>
</dbReference>
<dbReference type="GO" id="GO:0005524">
    <property type="term" value="F:ATP binding"/>
    <property type="evidence" value="ECO:0007669"/>
    <property type="project" value="UniProtKB-KW"/>
</dbReference>
<dbReference type="GO" id="GO:0140380">
    <property type="term" value="P:psilocybin biosynthetic process"/>
    <property type="evidence" value="ECO:0000314"/>
    <property type="project" value="GO_Central"/>
</dbReference>
<dbReference type="Gene3D" id="3.90.1200.10">
    <property type="match status" value="1"/>
</dbReference>
<dbReference type="Gene3D" id="3.30.200.20">
    <property type="entry name" value="Phosphorylase Kinase, domain 1"/>
    <property type="match status" value="1"/>
</dbReference>
<dbReference type="InterPro" id="IPR002575">
    <property type="entry name" value="Aminoglycoside_PTrfase"/>
</dbReference>
<dbReference type="InterPro" id="IPR015897">
    <property type="entry name" value="CHK_kinase-like"/>
</dbReference>
<dbReference type="InterPro" id="IPR011009">
    <property type="entry name" value="Kinase-like_dom_sf"/>
</dbReference>
<dbReference type="PANTHER" id="PTHR34273">
    <property type="entry name" value="METHYLTHIORIBOSE KINASE"/>
    <property type="match status" value="1"/>
</dbReference>
<dbReference type="PANTHER" id="PTHR34273:SF2">
    <property type="entry name" value="METHYLTHIORIBOSE KINASE"/>
    <property type="match status" value="1"/>
</dbReference>
<dbReference type="Pfam" id="PF01636">
    <property type="entry name" value="APH"/>
    <property type="match status" value="1"/>
</dbReference>
<dbReference type="SMART" id="SM00587">
    <property type="entry name" value="CHK"/>
    <property type="match status" value="1"/>
</dbReference>
<dbReference type="SUPFAM" id="SSF56112">
    <property type="entry name" value="Protein kinase-like (PK-like)"/>
    <property type="match status" value="1"/>
</dbReference>